<sequence>MGKIKELQTSLANKIAAGEVVERPSSVVKELLENAIDAGATEISIEVEESGVQSIRVVDNGSGIEAEDLGLVFHRHATSKLDQDEDLFHIRTLGFRGEALASISSVAKVTLKTCTDNANGNEIYVENGEILNHKPAKAKKGTDILVESLFYNTPARLKYIKSLYTELGKITDIVNRMAMSHPDIRIALISDGKTMLSTNGSGRTNEVMAEIYGMKVARDLVHISGDTSDYHIEGFVAKPEHSRSNKHYISIFINGRYIKNFMLNKAILEGYHTLLTIGRFPICYINIEMDPILVDVNVHPTKLEVRLSKEEQLYQLIVSKIQEAFKDRILIPKNNLDYVPKKNKVLYSFEQQKIEFEQRQNTENNQEKTFSSEESNSKSFMAENQNDEIVIKEDSYNPFVTKTSESLITDDESSGYNNTREKDEDYFKKQQEILQEMDQTFDSNEDASVQNYENKASDDYYDVNDIKGTKSKDPKRRIPYMEIVGQVHGTYIIAQNEFGMYMIDQHAAQERIKYEYFRDKIGEVTNEVQDLLIPLTFHFSKDEQLVIDQYKNELQQVGIMLEHFGGHDYIVSSYPVWFPKDEVEEIIKDMIELILEEKKVDIKKLREDVAIMMSCKKSIKANHYLQKHEMSDLIDQLREAEDPFTCPHGRPIIINFSKYELEKLFKRVM</sequence>
<protein>
    <recommendedName>
        <fullName evidence="1">DNA mismatch repair protein MutL</fullName>
    </recommendedName>
</protein>
<comment type="function">
    <text evidence="1">This protein is involved in the repair of mismatches in DNA. It is required for dam-dependent methyl-directed DNA mismatch repair. May act as a 'molecular matchmaker', a protein that promotes the formation of a stable complex between two or more DNA-binding proteins in an ATP-dependent manner without itself being part of a final effector complex.</text>
</comment>
<comment type="similarity">
    <text evidence="1">Belongs to the DNA mismatch repair MutL/HexB family.</text>
</comment>
<evidence type="ECO:0000255" key="1">
    <source>
        <dbReference type="HAMAP-Rule" id="MF_00149"/>
    </source>
</evidence>
<evidence type="ECO:0000256" key="2">
    <source>
        <dbReference type="SAM" id="MobiDB-lite"/>
    </source>
</evidence>
<feature type="chain" id="PRO_1000010084" description="DNA mismatch repair protein MutL">
    <location>
        <begin position="1"/>
        <end position="669"/>
    </location>
</feature>
<feature type="region of interest" description="Disordered" evidence="2">
    <location>
        <begin position="357"/>
        <end position="379"/>
    </location>
</feature>
<feature type="compositionally biased region" description="Polar residues" evidence="2">
    <location>
        <begin position="361"/>
        <end position="379"/>
    </location>
</feature>
<reference key="1">
    <citation type="journal article" date="2008" name="Antimicrob. Agents Chemother.">
        <title>Mutated response regulator graR is responsible for phenotypic conversion of Staphylococcus aureus from heterogeneous vancomycin-intermediate resistance to vancomycin-intermediate resistance.</title>
        <authorList>
            <person name="Neoh H.-M."/>
            <person name="Cui L."/>
            <person name="Yuzawa H."/>
            <person name="Takeuchi F."/>
            <person name="Matsuo M."/>
            <person name="Hiramatsu K."/>
        </authorList>
    </citation>
    <scope>NUCLEOTIDE SEQUENCE [LARGE SCALE GENOMIC DNA]</scope>
    <source>
        <strain>Mu3 / ATCC 700698</strain>
    </source>
</reference>
<organism>
    <name type="scientific">Staphylococcus aureus (strain Mu3 / ATCC 700698)</name>
    <dbReference type="NCBI Taxonomy" id="418127"/>
    <lineage>
        <taxon>Bacteria</taxon>
        <taxon>Bacillati</taxon>
        <taxon>Bacillota</taxon>
        <taxon>Bacilli</taxon>
        <taxon>Bacillales</taxon>
        <taxon>Staphylococcaceae</taxon>
        <taxon>Staphylococcus</taxon>
    </lineage>
</organism>
<dbReference type="EMBL" id="AP009324">
    <property type="protein sequence ID" value="BAF78169.1"/>
    <property type="molecule type" value="Genomic_DNA"/>
</dbReference>
<dbReference type="RefSeq" id="WP_000516269.1">
    <property type="nucleotide sequence ID" value="NC_009782.1"/>
</dbReference>
<dbReference type="SMR" id="A7X1T8"/>
<dbReference type="KEGG" id="saw:SAHV_1286"/>
<dbReference type="HOGENOM" id="CLU_004131_4_1_9"/>
<dbReference type="GO" id="GO:0032300">
    <property type="term" value="C:mismatch repair complex"/>
    <property type="evidence" value="ECO:0007669"/>
    <property type="project" value="InterPro"/>
</dbReference>
<dbReference type="GO" id="GO:0005524">
    <property type="term" value="F:ATP binding"/>
    <property type="evidence" value="ECO:0007669"/>
    <property type="project" value="InterPro"/>
</dbReference>
<dbReference type="GO" id="GO:0016887">
    <property type="term" value="F:ATP hydrolysis activity"/>
    <property type="evidence" value="ECO:0007669"/>
    <property type="project" value="InterPro"/>
</dbReference>
<dbReference type="GO" id="GO:0140664">
    <property type="term" value="F:ATP-dependent DNA damage sensor activity"/>
    <property type="evidence" value="ECO:0007669"/>
    <property type="project" value="InterPro"/>
</dbReference>
<dbReference type="GO" id="GO:0030983">
    <property type="term" value="F:mismatched DNA binding"/>
    <property type="evidence" value="ECO:0007669"/>
    <property type="project" value="InterPro"/>
</dbReference>
<dbReference type="GO" id="GO:0006298">
    <property type="term" value="P:mismatch repair"/>
    <property type="evidence" value="ECO:0007669"/>
    <property type="project" value="UniProtKB-UniRule"/>
</dbReference>
<dbReference type="CDD" id="cd16926">
    <property type="entry name" value="HATPase_MutL-MLH-PMS-like"/>
    <property type="match status" value="1"/>
</dbReference>
<dbReference type="CDD" id="cd00782">
    <property type="entry name" value="MutL_Trans"/>
    <property type="match status" value="1"/>
</dbReference>
<dbReference type="FunFam" id="3.30.1370.100:FF:000004">
    <property type="entry name" value="DNA mismatch repair endonuclease MutL"/>
    <property type="match status" value="1"/>
</dbReference>
<dbReference type="FunFam" id="3.30.230.10:FF:000036">
    <property type="entry name" value="DNA mismatch repair endonuclease MutL"/>
    <property type="match status" value="1"/>
</dbReference>
<dbReference type="FunFam" id="3.30.565.10:FF:000003">
    <property type="entry name" value="DNA mismatch repair endonuclease MutL"/>
    <property type="match status" value="1"/>
</dbReference>
<dbReference type="Gene3D" id="3.30.230.10">
    <property type="match status" value="1"/>
</dbReference>
<dbReference type="Gene3D" id="3.30.565.10">
    <property type="entry name" value="Histidine kinase-like ATPase, C-terminal domain"/>
    <property type="match status" value="1"/>
</dbReference>
<dbReference type="Gene3D" id="3.30.1540.20">
    <property type="entry name" value="MutL, C-terminal domain, dimerisation subdomain"/>
    <property type="match status" value="1"/>
</dbReference>
<dbReference type="Gene3D" id="3.30.1370.100">
    <property type="entry name" value="MutL, C-terminal domain, regulatory subdomain"/>
    <property type="match status" value="1"/>
</dbReference>
<dbReference type="HAMAP" id="MF_00149">
    <property type="entry name" value="DNA_mis_repair"/>
    <property type="match status" value="1"/>
</dbReference>
<dbReference type="InterPro" id="IPR014762">
    <property type="entry name" value="DNA_mismatch_repair_CS"/>
</dbReference>
<dbReference type="InterPro" id="IPR020667">
    <property type="entry name" value="DNA_mismatch_repair_MutL"/>
</dbReference>
<dbReference type="InterPro" id="IPR013507">
    <property type="entry name" value="DNA_mismatch_S5_2-like"/>
</dbReference>
<dbReference type="InterPro" id="IPR036890">
    <property type="entry name" value="HATPase_C_sf"/>
</dbReference>
<dbReference type="InterPro" id="IPR002099">
    <property type="entry name" value="MutL/Mlh/PMS"/>
</dbReference>
<dbReference type="InterPro" id="IPR038973">
    <property type="entry name" value="MutL/Mlh/Pms-like"/>
</dbReference>
<dbReference type="InterPro" id="IPR014790">
    <property type="entry name" value="MutL_C"/>
</dbReference>
<dbReference type="InterPro" id="IPR042120">
    <property type="entry name" value="MutL_C_dimsub"/>
</dbReference>
<dbReference type="InterPro" id="IPR042121">
    <property type="entry name" value="MutL_C_regsub"/>
</dbReference>
<dbReference type="InterPro" id="IPR037198">
    <property type="entry name" value="MutL_C_sf"/>
</dbReference>
<dbReference type="InterPro" id="IPR020568">
    <property type="entry name" value="Ribosomal_Su5_D2-typ_SF"/>
</dbReference>
<dbReference type="InterPro" id="IPR014721">
    <property type="entry name" value="Ribsml_uS5_D2-typ_fold_subgr"/>
</dbReference>
<dbReference type="NCBIfam" id="TIGR00585">
    <property type="entry name" value="mutl"/>
    <property type="match status" value="1"/>
</dbReference>
<dbReference type="NCBIfam" id="NF000950">
    <property type="entry name" value="PRK00095.1-3"/>
    <property type="match status" value="1"/>
</dbReference>
<dbReference type="PANTHER" id="PTHR10073">
    <property type="entry name" value="DNA MISMATCH REPAIR PROTEIN MLH, PMS, MUTL"/>
    <property type="match status" value="1"/>
</dbReference>
<dbReference type="PANTHER" id="PTHR10073:SF12">
    <property type="entry name" value="DNA MISMATCH REPAIR PROTEIN MLH1"/>
    <property type="match status" value="1"/>
</dbReference>
<dbReference type="Pfam" id="PF01119">
    <property type="entry name" value="DNA_mis_repair"/>
    <property type="match status" value="1"/>
</dbReference>
<dbReference type="Pfam" id="PF13589">
    <property type="entry name" value="HATPase_c_3"/>
    <property type="match status" value="1"/>
</dbReference>
<dbReference type="Pfam" id="PF08676">
    <property type="entry name" value="MutL_C"/>
    <property type="match status" value="1"/>
</dbReference>
<dbReference type="SMART" id="SM01340">
    <property type="entry name" value="DNA_mis_repair"/>
    <property type="match status" value="1"/>
</dbReference>
<dbReference type="SMART" id="SM00853">
    <property type="entry name" value="MutL_C"/>
    <property type="match status" value="1"/>
</dbReference>
<dbReference type="SUPFAM" id="SSF55874">
    <property type="entry name" value="ATPase domain of HSP90 chaperone/DNA topoisomerase II/histidine kinase"/>
    <property type="match status" value="1"/>
</dbReference>
<dbReference type="SUPFAM" id="SSF118116">
    <property type="entry name" value="DNA mismatch repair protein MutL"/>
    <property type="match status" value="1"/>
</dbReference>
<dbReference type="SUPFAM" id="SSF54211">
    <property type="entry name" value="Ribosomal protein S5 domain 2-like"/>
    <property type="match status" value="1"/>
</dbReference>
<dbReference type="PROSITE" id="PS00058">
    <property type="entry name" value="DNA_MISMATCH_REPAIR_1"/>
    <property type="match status" value="1"/>
</dbReference>
<proteinExistence type="inferred from homology"/>
<gene>
    <name evidence="1" type="primary">mutL</name>
    <name type="ordered locus">SAHV_1286</name>
</gene>
<keyword id="KW-0227">DNA damage</keyword>
<keyword id="KW-0234">DNA repair</keyword>
<name>MUTL_STAA1</name>
<accession>A7X1T8</accession>